<name>RL10_BACC0</name>
<organism>
    <name type="scientific">Bacillus cereus (strain AH820)</name>
    <dbReference type="NCBI Taxonomy" id="405535"/>
    <lineage>
        <taxon>Bacteria</taxon>
        <taxon>Bacillati</taxon>
        <taxon>Bacillota</taxon>
        <taxon>Bacilli</taxon>
        <taxon>Bacillales</taxon>
        <taxon>Bacillaceae</taxon>
        <taxon>Bacillus</taxon>
        <taxon>Bacillus cereus group</taxon>
    </lineage>
</organism>
<evidence type="ECO:0000255" key="1">
    <source>
        <dbReference type="HAMAP-Rule" id="MF_00362"/>
    </source>
</evidence>
<evidence type="ECO:0000305" key="2"/>
<proteinExistence type="inferred from homology"/>
<comment type="function">
    <text evidence="1">Forms part of the ribosomal stalk, playing a central role in the interaction of the ribosome with GTP-bound translation factors.</text>
</comment>
<comment type="subunit">
    <text evidence="1">Part of the ribosomal stalk of the 50S ribosomal subunit. The N-terminus interacts with L11 and the large rRNA to form the base of the stalk. The C-terminus forms an elongated spine to which L12 dimers bind in a sequential fashion forming a multimeric L10(L12)X complex.</text>
</comment>
<comment type="similarity">
    <text evidence="1">Belongs to the universal ribosomal protein uL10 family.</text>
</comment>
<dbReference type="EMBL" id="CP001283">
    <property type="protein sequence ID" value="ACK89357.1"/>
    <property type="molecule type" value="Genomic_DNA"/>
</dbReference>
<dbReference type="RefSeq" id="WP_000048716.1">
    <property type="nucleotide sequence ID" value="NC_011773.1"/>
</dbReference>
<dbReference type="SMR" id="B7JKA7"/>
<dbReference type="GeneID" id="93010954"/>
<dbReference type="KEGG" id="bcu:BCAH820_0110"/>
<dbReference type="HOGENOM" id="CLU_092227_2_0_9"/>
<dbReference type="Proteomes" id="UP000001363">
    <property type="component" value="Chromosome"/>
</dbReference>
<dbReference type="GO" id="GO:0015934">
    <property type="term" value="C:large ribosomal subunit"/>
    <property type="evidence" value="ECO:0007669"/>
    <property type="project" value="InterPro"/>
</dbReference>
<dbReference type="GO" id="GO:0070180">
    <property type="term" value="F:large ribosomal subunit rRNA binding"/>
    <property type="evidence" value="ECO:0007669"/>
    <property type="project" value="UniProtKB-UniRule"/>
</dbReference>
<dbReference type="GO" id="GO:0003735">
    <property type="term" value="F:structural constituent of ribosome"/>
    <property type="evidence" value="ECO:0007669"/>
    <property type="project" value="InterPro"/>
</dbReference>
<dbReference type="GO" id="GO:0006412">
    <property type="term" value="P:translation"/>
    <property type="evidence" value="ECO:0007669"/>
    <property type="project" value="UniProtKB-UniRule"/>
</dbReference>
<dbReference type="CDD" id="cd05797">
    <property type="entry name" value="Ribosomal_L10"/>
    <property type="match status" value="1"/>
</dbReference>
<dbReference type="FunFam" id="3.30.70.1730:FF:000001">
    <property type="entry name" value="50S ribosomal protein L10"/>
    <property type="match status" value="1"/>
</dbReference>
<dbReference type="Gene3D" id="3.30.70.1730">
    <property type="match status" value="1"/>
</dbReference>
<dbReference type="Gene3D" id="6.10.250.290">
    <property type="match status" value="1"/>
</dbReference>
<dbReference type="HAMAP" id="MF_00362">
    <property type="entry name" value="Ribosomal_uL10"/>
    <property type="match status" value="1"/>
</dbReference>
<dbReference type="InterPro" id="IPR001790">
    <property type="entry name" value="Ribosomal_uL10"/>
</dbReference>
<dbReference type="InterPro" id="IPR043141">
    <property type="entry name" value="Ribosomal_uL10-like_sf"/>
</dbReference>
<dbReference type="InterPro" id="IPR022973">
    <property type="entry name" value="Ribosomal_uL10_bac"/>
</dbReference>
<dbReference type="InterPro" id="IPR047865">
    <property type="entry name" value="Ribosomal_uL10_bac_type"/>
</dbReference>
<dbReference type="InterPro" id="IPR002363">
    <property type="entry name" value="Ribosomal_uL10_CS_bac"/>
</dbReference>
<dbReference type="NCBIfam" id="NF000955">
    <property type="entry name" value="PRK00099.1-1"/>
    <property type="match status" value="1"/>
</dbReference>
<dbReference type="PANTHER" id="PTHR11560">
    <property type="entry name" value="39S RIBOSOMAL PROTEIN L10, MITOCHONDRIAL"/>
    <property type="match status" value="1"/>
</dbReference>
<dbReference type="Pfam" id="PF00466">
    <property type="entry name" value="Ribosomal_L10"/>
    <property type="match status" value="1"/>
</dbReference>
<dbReference type="SUPFAM" id="SSF160369">
    <property type="entry name" value="Ribosomal protein L10-like"/>
    <property type="match status" value="1"/>
</dbReference>
<dbReference type="PROSITE" id="PS01109">
    <property type="entry name" value="RIBOSOMAL_L10"/>
    <property type="match status" value="1"/>
</dbReference>
<protein>
    <recommendedName>
        <fullName evidence="1">Large ribosomal subunit protein uL10</fullName>
    </recommendedName>
    <alternativeName>
        <fullName evidence="2">50S ribosomal protein L10</fullName>
    </alternativeName>
</protein>
<sequence length="166" mass="18037">MSKVIETKQQVVTEIADKLRASKSTIVVDYRGLTVSEATELRKQLREAGVEFKVYKNSLTRRAAESAEMAELNEFLTGPNAIAFSNEDVVAPAKVLNDFAKDHEALEIKAGVIEGKLVTLDEVKAIATLPSREGLLSMLLSVLQAPIRNLALATKAVADQKEEQGA</sequence>
<accession>B7JKA7</accession>
<keyword id="KW-0687">Ribonucleoprotein</keyword>
<keyword id="KW-0689">Ribosomal protein</keyword>
<keyword id="KW-0694">RNA-binding</keyword>
<keyword id="KW-0699">rRNA-binding</keyword>
<gene>
    <name evidence="1" type="primary">rplJ</name>
    <name type="ordered locus">BCAH820_0110</name>
</gene>
<reference key="1">
    <citation type="submission" date="2008-10" db="EMBL/GenBank/DDBJ databases">
        <title>Genome sequence of Bacillus cereus AH820.</title>
        <authorList>
            <person name="Dodson R.J."/>
            <person name="Durkin A.S."/>
            <person name="Rosovitz M.J."/>
            <person name="Rasko D.A."/>
            <person name="Hoffmaster A."/>
            <person name="Ravel J."/>
            <person name="Sutton G."/>
        </authorList>
    </citation>
    <scope>NUCLEOTIDE SEQUENCE [LARGE SCALE GENOMIC DNA]</scope>
    <source>
        <strain>AH820</strain>
    </source>
</reference>
<feature type="chain" id="PRO_1000120913" description="Large ribosomal subunit protein uL10">
    <location>
        <begin position="1"/>
        <end position="166"/>
    </location>
</feature>